<name>NTPPA_CLOB1</name>
<proteinExistence type="inferred from homology"/>
<accession>A7FXW4</accession>
<gene>
    <name type="ordered locus">CLB_3029</name>
</gene>
<feature type="chain" id="PRO_1000127777" description="dTTP/UTP pyrophosphatase">
    <location>
        <begin position="1"/>
        <end position="194"/>
    </location>
</feature>
<feature type="active site" description="Proton acceptor" evidence="1">
    <location>
        <position position="73"/>
    </location>
</feature>
<feature type="site" description="Important for substrate specificity" evidence="1">
    <location>
        <position position="12"/>
    </location>
</feature>
<feature type="site" description="Important for substrate specificity" evidence="1">
    <location>
        <position position="74"/>
    </location>
</feature>
<feature type="site" description="Important for substrate specificity" evidence="1">
    <location>
        <position position="158"/>
    </location>
</feature>
<organism>
    <name type="scientific">Clostridium botulinum (strain ATCC 19397 / Type A)</name>
    <dbReference type="NCBI Taxonomy" id="441770"/>
    <lineage>
        <taxon>Bacteria</taxon>
        <taxon>Bacillati</taxon>
        <taxon>Bacillota</taxon>
        <taxon>Clostridia</taxon>
        <taxon>Eubacteriales</taxon>
        <taxon>Clostridiaceae</taxon>
        <taxon>Clostridium</taxon>
    </lineage>
</organism>
<comment type="function">
    <text evidence="1">Nucleoside triphosphate pyrophosphatase that hydrolyzes dTTP and UTP. May have a dual role in cell division arrest and in preventing the incorporation of modified nucleotides into cellular nucleic acids.</text>
</comment>
<comment type="catalytic activity">
    <reaction evidence="1">
        <text>dTTP + H2O = dTMP + diphosphate + H(+)</text>
        <dbReference type="Rhea" id="RHEA:28534"/>
        <dbReference type="ChEBI" id="CHEBI:15377"/>
        <dbReference type="ChEBI" id="CHEBI:15378"/>
        <dbReference type="ChEBI" id="CHEBI:33019"/>
        <dbReference type="ChEBI" id="CHEBI:37568"/>
        <dbReference type="ChEBI" id="CHEBI:63528"/>
        <dbReference type="EC" id="3.6.1.9"/>
    </reaction>
</comment>
<comment type="catalytic activity">
    <reaction evidence="1">
        <text>UTP + H2O = UMP + diphosphate + H(+)</text>
        <dbReference type="Rhea" id="RHEA:29395"/>
        <dbReference type="ChEBI" id="CHEBI:15377"/>
        <dbReference type="ChEBI" id="CHEBI:15378"/>
        <dbReference type="ChEBI" id="CHEBI:33019"/>
        <dbReference type="ChEBI" id="CHEBI:46398"/>
        <dbReference type="ChEBI" id="CHEBI:57865"/>
        <dbReference type="EC" id="3.6.1.9"/>
    </reaction>
</comment>
<comment type="cofactor">
    <cofactor evidence="1">
        <name>a divalent metal cation</name>
        <dbReference type="ChEBI" id="CHEBI:60240"/>
    </cofactor>
</comment>
<comment type="subcellular location">
    <subcellularLocation>
        <location evidence="1">Cytoplasm</location>
    </subcellularLocation>
</comment>
<comment type="similarity">
    <text evidence="1">Belongs to the Maf family. YhdE subfamily.</text>
</comment>
<reference key="1">
    <citation type="journal article" date="2007" name="PLoS ONE">
        <title>Analysis of the neurotoxin complex genes in Clostridium botulinum A1-A4 and B1 strains: BoNT/A3, /Ba4 and /B1 clusters are located within plasmids.</title>
        <authorList>
            <person name="Smith T.J."/>
            <person name="Hill K.K."/>
            <person name="Foley B.T."/>
            <person name="Detter J.C."/>
            <person name="Munk A.C."/>
            <person name="Bruce D.C."/>
            <person name="Doggett N.A."/>
            <person name="Smith L.A."/>
            <person name="Marks J.D."/>
            <person name="Xie G."/>
            <person name="Brettin T.S."/>
        </authorList>
    </citation>
    <scope>NUCLEOTIDE SEQUENCE [LARGE SCALE GENOMIC DNA]</scope>
    <source>
        <strain>ATCC 19397 / Type A</strain>
    </source>
</reference>
<protein>
    <recommendedName>
        <fullName evidence="1">dTTP/UTP pyrophosphatase</fullName>
        <shortName evidence="1">dTTPase/UTPase</shortName>
        <ecNumber evidence="1">3.6.1.9</ecNumber>
    </recommendedName>
    <alternativeName>
        <fullName evidence="1">Nucleoside triphosphate pyrophosphatase</fullName>
    </alternativeName>
    <alternativeName>
        <fullName evidence="1">Nucleotide pyrophosphatase</fullName>
        <shortName evidence="1">Nucleotide PPase</shortName>
    </alternativeName>
</protein>
<dbReference type="EC" id="3.6.1.9" evidence="1"/>
<dbReference type="EMBL" id="CP000726">
    <property type="protein sequence ID" value="ABS32556.1"/>
    <property type="molecule type" value="Genomic_DNA"/>
</dbReference>
<dbReference type="RefSeq" id="WP_012048033.1">
    <property type="nucleotide sequence ID" value="NC_009697.1"/>
</dbReference>
<dbReference type="SMR" id="A7FXW4"/>
<dbReference type="KEGG" id="cba:CLB_3029"/>
<dbReference type="HOGENOM" id="CLU_040416_0_0_9"/>
<dbReference type="GO" id="GO:0005737">
    <property type="term" value="C:cytoplasm"/>
    <property type="evidence" value="ECO:0007669"/>
    <property type="project" value="UniProtKB-SubCell"/>
</dbReference>
<dbReference type="GO" id="GO:0036218">
    <property type="term" value="F:dTTP diphosphatase activity"/>
    <property type="evidence" value="ECO:0007669"/>
    <property type="project" value="RHEA"/>
</dbReference>
<dbReference type="GO" id="GO:0036221">
    <property type="term" value="F:UTP diphosphatase activity"/>
    <property type="evidence" value="ECO:0007669"/>
    <property type="project" value="RHEA"/>
</dbReference>
<dbReference type="GO" id="GO:0009117">
    <property type="term" value="P:nucleotide metabolic process"/>
    <property type="evidence" value="ECO:0007669"/>
    <property type="project" value="UniProtKB-KW"/>
</dbReference>
<dbReference type="CDD" id="cd00555">
    <property type="entry name" value="Maf"/>
    <property type="match status" value="1"/>
</dbReference>
<dbReference type="FunFam" id="3.90.950.10:FF:000016">
    <property type="entry name" value="dTTP/UTP pyrophosphatase"/>
    <property type="match status" value="1"/>
</dbReference>
<dbReference type="Gene3D" id="3.90.950.10">
    <property type="match status" value="1"/>
</dbReference>
<dbReference type="HAMAP" id="MF_00528">
    <property type="entry name" value="Maf"/>
    <property type="match status" value="1"/>
</dbReference>
<dbReference type="InterPro" id="IPR029001">
    <property type="entry name" value="ITPase-like_fam"/>
</dbReference>
<dbReference type="InterPro" id="IPR003697">
    <property type="entry name" value="Maf-like"/>
</dbReference>
<dbReference type="NCBIfam" id="TIGR00172">
    <property type="entry name" value="maf"/>
    <property type="match status" value="1"/>
</dbReference>
<dbReference type="NCBIfam" id="NF000867">
    <property type="entry name" value="PRK00078.1"/>
    <property type="match status" value="1"/>
</dbReference>
<dbReference type="PANTHER" id="PTHR43213">
    <property type="entry name" value="BIFUNCTIONAL DTTP/UTP PYROPHOSPHATASE/METHYLTRANSFERASE PROTEIN-RELATED"/>
    <property type="match status" value="1"/>
</dbReference>
<dbReference type="PANTHER" id="PTHR43213:SF5">
    <property type="entry name" value="BIFUNCTIONAL DTTP_UTP PYROPHOSPHATASE_METHYLTRANSFERASE PROTEIN-RELATED"/>
    <property type="match status" value="1"/>
</dbReference>
<dbReference type="Pfam" id="PF02545">
    <property type="entry name" value="Maf"/>
    <property type="match status" value="1"/>
</dbReference>
<dbReference type="PIRSF" id="PIRSF006305">
    <property type="entry name" value="Maf"/>
    <property type="match status" value="1"/>
</dbReference>
<dbReference type="SUPFAM" id="SSF52972">
    <property type="entry name" value="ITPase-like"/>
    <property type="match status" value="1"/>
</dbReference>
<keyword id="KW-0963">Cytoplasm</keyword>
<keyword id="KW-0378">Hydrolase</keyword>
<keyword id="KW-0546">Nucleotide metabolism</keyword>
<sequence>MKNIILASASERRQELLKRILEDFQIIVSDFDESSAPFKDNIPSYVMNLAEGKARSVSKKIMDQDSNLVIGCDTLVAFNNKVLGKPKDKKDAFEMLQALSGNEHEVYSGLAILDVKSNKIITDFVCTKVKFSKLTSLQIEKYINTGDSMDKAGAYGIQGKAGVFVENINGCYYNVVGLPLNKLNSMLMEMGVNL</sequence>
<evidence type="ECO:0000255" key="1">
    <source>
        <dbReference type="HAMAP-Rule" id="MF_00528"/>
    </source>
</evidence>